<name>RS2_COLP3</name>
<proteinExistence type="inferred from homology"/>
<protein>
    <recommendedName>
        <fullName evidence="1">Small ribosomal subunit protein uS2</fullName>
    </recommendedName>
    <alternativeName>
        <fullName evidence="2">30S ribosomal protein S2</fullName>
    </alternativeName>
</protein>
<accession>Q485H0</accession>
<feature type="chain" id="PRO_1000003941" description="Small ribosomal subunit protein uS2">
    <location>
        <begin position="1"/>
        <end position="242"/>
    </location>
</feature>
<dbReference type="EMBL" id="CP000083">
    <property type="protein sequence ID" value="AAZ28713.1"/>
    <property type="molecule type" value="Genomic_DNA"/>
</dbReference>
<dbReference type="RefSeq" id="WP_011042389.1">
    <property type="nucleotide sequence ID" value="NC_003910.7"/>
</dbReference>
<dbReference type="SMR" id="Q485H0"/>
<dbReference type="STRING" id="167879.CPS_1553"/>
<dbReference type="KEGG" id="cps:CPS_1553"/>
<dbReference type="eggNOG" id="COG0052">
    <property type="taxonomic scope" value="Bacteria"/>
</dbReference>
<dbReference type="HOGENOM" id="CLU_040318_2_1_6"/>
<dbReference type="Proteomes" id="UP000000547">
    <property type="component" value="Chromosome"/>
</dbReference>
<dbReference type="GO" id="GO:0022627">
    <property type="term" value="C:cytosolic small ribosomal subunit"/>
    <property type="evidence" value="ECO:0007669"/>
    <property type="project" value="TreeGrafter"/>
</dbReference>
<dbReference type="GO" id="GO:0003735">
    <property type="term" value="F:structural constituent of ribosome"/>
    <property type="evidence" value="ECO:0007669"/>
    <property type="project" value="InterPro"/>
</dbReference>
<dbReference type="GO" id="GO:0006412">
    <property type="term" value="P:translation"/>
    <property type="evidence" value="ECO:0007669"/>
    <property type="project" value="UniProtKB-UniRule"/>
</dbReference>
<dbReference type="CDD" id="cd01425">
    <property type="entry name" value="RPS2"/>
    <property type="match status" value="1"/>
</dbReference>
<dbReference type="FunFam" id="1.10.287.610:FF:000001">
    <property type="entry name" value="30S ribosomal protein S2"/>
    <property type="match status" value="1"/>
</dbReference>
<dbReference type="Gene3D" id="3.40.50.10490">
    <property type="entry name" value="Glucose-6-phosphate isomerase like protein, domain 1"/>
    <property type="match status" value="1"/>
</dbReference>
<dbReference type="Gene3D" id="1.10.287.610">
    <property type="entry name" value="Helix hairpin bin"/>
    <property type="match status" value="1"/>
</dbReference>
<dbReference type="HAMAP" id="MF_00291_B">
    <property type="entry name" value="Ribosomal_uS2_B"/>
    <property type="match status" value="1"/>
</dbReference>
<dbReference type="InterPro" id="IPR001865">
    <property type="entry name" value="Ribosomal_uS2"/>
</dbReference>
<dbReference type="InterPro" id="IPR005706">
    <property type="entry name" value="Ribosomal_uS2_bac/mit/plastid"/>
</dbReference>
<dbReference type="InterPro" id="IPR018130">
    <property type="entry name" value="Ribosomal_uS2_CS"/>
</dbReference>
<dbReference type="InterPro" id="IPR023591">
    <property type="entry name" value="Ribosomal_uS2_flav_dom_sf"/>
</dbReference>
<dbReference type="NCBIfam" id="TIGR01011">
    <property type="entry name" value="rpsB_bact"/>
    <property type="match status" value="1"/>
</dbReference>
<dbReference type="PANTHER" id="PTHR12534">
    <property type="entry name" value="30S RIBOSOMAL PROTEIN S2 PROKARYOTIC AND ORGANELLAR"/>
    <property type="match status" value="1"/>
</dbReference>
<dbReference type="PANTHER" id="PTHR12534:SF0">
    <property type="entry name" value="SMALL RIBOSOMAL SUBUNIT PROTEIN US2M"/>
    <property type="match status" value="1"/>
</dbReference>
<dbReference type="Pfam" id="PF00318">
    <property type="entry name" value="Ribosomal_S2"/>
    <property type="match status" value="1"/>
</dbReference>
<dbReference type="PRINTS" id="PR00395">
    <property type="entry name" value="RIBOSOMALS2"/>
</dbReference>
<dbReference type="SUPFAM" id="SSF52313">
    <property type="entry name" value="Ribosomal protein S2"/>
    <property type="match status" value="1"/>
</dbReference>
<dbReference type="PROSITE" id="PS00962">
    <property type="entry name" value="RIBOSOMAL_S2_1"/>
    <property type="match status" value="1"/>
</dbReference>
<dbReference type="PROSITE" id="PS00963">
    <property type="entry name" value="RIBOSOMAL_S2_2"/>
    <property type="match status" value="1"/>
</dbReference>
<evidence type="ECO:0000255" key="1">
    <source>
        <dbReference type="HAMAP-Rule" id="MF_00291"/>
    </source>
</evidence>
<evidence type="ECO:0000305" key="2"/>
<sequence>MSNVSMRDMLKAGVHFGHKTRYWNPKMKQFIFGARDKVHIINLEQTVPMFNEALAFVNNVSSKKGKVLFVGTKRAASDAIKDAAIKSDQFYVNHRWLGGMLTNWKTVRQSIKRLKDLESQSTDGTFEALTKKEALMRTREMEKLDKSLGGIKNMGGLPDVLFIIDADHEHIAIKEANNLGIPVISVVDTNSNPDGVDYVVPGNDDAIRAVTLYCDAVANSVLSGREQNIVVQAEKDGFVEAE</sequence>
<reference key="1">
    <citation type="journal article" date="2005" name="Proc. Natl. Acad. Sci. U.S.A.">
        <title>The psychrophilic lifestyle as revealed by the genome sequence of Colwellia psychrerythraea 34H through genomic and proteomic analyses.</title>
        <authorList>
            <person name="Methe B.A."/>
            <person name="Nelson K.E."/>
            <person name="Deming J.W."/>
            <person name="Momen B."/>
            <person name="Melamud E."/>
            <person name="Zhang X."/>
            <person name="Moult J."/>
            <person name="Madupu R."/>
            <person name="Nelson W.C."/>
            <person name="Dodson R.J."/>
            <person name="Brinkac L.M."/>
            <person name="Daugherty S.C."/>
            <person name="Durkin A.S."/>
            <person name="DeBoy R.T."/>
            <person name="Kolonay J.F."/>
            <person name="Sullivan S.A."/>
            <person name="Zhou L."/>
            <person name="Davidsen T.M."/>
            <person name="Wu M."/>
            <person name="Huston A.L."/>
            <person name="Lewis M."/>
            <person name="Weaver B."/>
            <person name="Weidman J.F."/>
            <person name="Khouri H."/>
            <person name="Utterback T.R."/>
            <person name="Feldblyum T.V."/>
            <person name="Fraser C.M."/>
        </authorList>
    </citation>
    <scope>NUCLEOTIDE SEQUENCE [LARGE SCALE GENOMIC DNA]</scope>
    <source>
        <strain>34H / ATCC BAA-681</strain>
    </source>
</reference>
<gene>
    <name evidence="1" type="primary">rpsB</name>
    <name type="ordered locus">CPS_1553</name>
</gene>
<organism>
    <name type="scientific">Colwellia psychrerythraea (strain 34H / ATCC BAA-681)</name>
    <name type="common">Vibrio psychroerythus</name>
    <dbReference type="NCBI Taxonomy" id="167879"/>
    <lineage>
        <taxon>Bacteria</taxon>
        <taxon>Pseudomonadati</taxon>
        <taxon>Pseudomonadota</taxon>
        <taxon>Gammaproteobacteria</taxon>
        <taxon>Alteromonadales</taxon>
        <taxon>Colwelliaceae</taxon>
        <taxon>Colwellia</taxon>
    </lineage>
</organism>
<keyword id="KW-0687">Ribonucleoprotein</keyword>
<keyword id="KW-0689">Ribosomal protein</keyword>
<comment type="similarity">
    <text evidence="1">Belongs to the universal ribosomal protein uS2 family.</text>
</comment>